<organism>
    <name type="scientific">Hahella chejuensis (strain KCTC 2396)</name>
    <dbReference type="NCBI Taxonomy" id="349521"/>
    <lineage>
        <taxon>Bacteria</taxon>
        <taxon>Pseudomonadati</taxon>
        <taxon>Pseudomonadota</taxon>
        <taxon>Gammaproteobacteria</taxon>
        <taxon>Oceanospirillales</taxon>
        <taxon>Hahellaceae</taxon>
        <taxon>Hahella</taxon>
    </lineage>
</organism>
<gene>
    <name evidence="1" type="primary">hslV</name>
    <name type="ordered locus">HCH_05979</name>
</gene>
<evidence type="ECO:0000255" key="1">
    <source>
        <dbReference type="HAMAP-Rule" id="MF_00248"/>
    </source>
</evidence>
<comment type="function">
    <text evidence="1">Protease subunit of a proteasome-like degradation complex believed to be a general protein degrading machinery.</text>
</comment>
<comment type="catalytic activity">
    <reaction evidence="1">
        <text>ATP-dependent cleavage of peptide bonds with broad specificity.</text>
        <dbReference type="EC" id="3.4.25.2"/>
    </reaction>
</comment>
<comment type="activity regulation">
    <text evidence="1">Allosterically activated by HslU binding.</text>
</comment>
<comment type="subunit">
    <text evidence="1">A double ring-shaped homohexamer of HslV is capped on each side by a ring-shaped HslU homohexamer. The assembly of the HslU/HslV complex is dependent on binding of ATP.</text>
</comment>
<comment type="subcellular location">
    <subcellularLocation>
        <location evidence="1">Cytoplasm</location>
    </subcellularLocation>
</comment>
<comment type="similarity">
    <text evidence="1">Belongs to the peptidase T1B family. HslV subfamily.</text>
</comment>
<sequence>MTTIVSVRRDGKVAMGGDGQVSLGNTVMKGNARKVRRLYHNKVIAGFAGGTADAFTLFERFEAQLEKHQGNLVRAAVELAKDWRTDRALRRLEALLAVADNKASLIITGNGDVIEPENSLIAIGSGGPYAQAAARALLENTELEASDIVKKSLVIAGDICVFTNQNLTLEEIDGTQTPSTV</sequence>
<dbReference type="EC" id="3.4.25.2" evidence="1"/>
<dbReference type="EMBL" id="CP000155">
    <property type="protein sequence ID" value="ABC32630.1"/>
    <property type="molecule type" value="Genomic_DNA"/>
</dbReference>
<dbReference type="SMR" id="Q2S9P4"/>
<dbReference type="STRING" id="349521.HCH_05979"/>
<dbReference type="MEROPS" id="T01.006"/>
<dbReference type="KEGG" id="hch:HCH_05979"/>
<dbReference type="eggNOG" id="COG5405">
    <property type="taxonomic scope" value="Bacteria"/>
</dbReference>
<dbReference type="HOGENOM" id="CLU_093872_1_0_6"/>
<dbReference type="OrthoDB" id="9804884at2"/>
<dbReference type="Proteomes" id="UP000000238">
    <property type="component" value="Chromosome"/>
</dbReference>
<dbReference type="GO" id="GO:0009376">
    <property type="term" value="C:HslUV protease complex"/>
    <property type="evidence" value="ECO:0007669"/>
    <property type="project" value="UniProtKB-UniRule"/>
</dbReference>
<dbReference type="GO" id="GO:0005839">
    <property type="term" value="C:proteasome core complex"/>
    <property type="evidence" value="ECO:0007669"/>
    <property type="project" value="InterPro"/>
</dbReference>
<dbReference type="GO" id="GO:0046872">
    <property type="term" value="F:metal ion binding"/>
    <property type="evidence" value="ECO:0007669"/>
    <property type="project" value="UniProtKB-KW"/>
</dbReference>
<dbReference type="GO" id="GO:0004298">
    <property type="term" value="F:threonine-type endopeptidase activity"/>
    <property type="evidence" value="ECO:0007669"/>
    <property type="project" value="UniProtKB-KW"/>
</dbReference>
<dbReference type="GO" id="GO:0051603">
    <property type="term" value="P:proteolysis involved in protein catabolic process"/>
    <property type="evidence" value="ECO:0007669"/>
    <property type="project" value="InterPro"/>
</dbReference>
<dbReference type="CDD" id="cd01913">
    <property type="entry name" value="protease_HslV"/>
    <property type="match status" value="1"/>
</dbReference>
<dbReference type="FunFam" id="3.60.20.10:FF:000002">
    <property type="entry name" value="ATP-dependent protease subunit HslV"/>
    <property type="match status" value="1"/>
</dbReference>
<dbReference type="Gene3D" id="3.60.20.10">
    <property type="entry name" value="Glutamine Phosphoribosylpyrophosphate, subunit 1, domain 1"/>
    <property type="match status" value="1"/>
</dbReference>
<dbReference type="HAMAP" id="MF_00248">
    <property type="entry name" value="HslV"/>
    <property type="match status" value="1"/>
</dbReference>
<dbReference type="InterPro" id="IPR022281">
    <property type="entry name" value="ATP-dep_Prtase_HsIV_su"/>
</dbReference>
<dbReference type="InterPro" id="IPR029055">
    <property type="entry name" value="Ntn_hydrolases_N"/>
</dbReference>
<dbReference type="InterPro" id="IPR001353">
    <property type="entry name" value="Proteasome_sua/b"/>
</dbReference>
<dbReference type="InterPro" id="IPR023333">
    <property type="entry name" value="Proteasome_suB-type"/>
</dbReference>
<dbReference type="NCBIfam" id="TIGR03692">
    <property type="entry name" value="ATP_dep_HslV"/>
    <property type="match status" value="1"/>
</dbReference>
<dbReference type="NCBIfam" id="NF003964">
    <property type="entry name" value="PRK05456.1"/>
    <property type="match status" value="1"/>
</dbReference>
<dbReference type="PANTHER" id="PTHR32194:SF0">
    <property type="entry name" value="ATP-DEPENDENT PROTEASE SUBUNIT HSLV"/>
    <property type="match status" value="1"/>
</dbReference>
<dbReference type="PANTHER" id="PTHR32194">
    <property type="entry name" value="METALLOPROTEASE TLDD"/>
    <property type="match status" value="1"/>
</dbReference>
<dbReference type="Pfam" id="PF00227">
    <property type="entry name" value="Proteasome"/>
    <property type="match status" value="1"/>
</dbReference>
<dbReference type="PIRSF" id="PIRSF039093">
    <property type="entry name" value="HslV"/>
    <property type="match status" value="1"/>
</dbReference>
<dbReference type="SUPFAM" id="SSF56235">
    <property type="entry name" value="N-terminal nucleophile aminohydrolases (Ntn hydrolases)"/>
    <property type="match status" value="1"/>
</dbReference>
<dbReference type="PROSITE" id="PS51476">
    <property type="entry name" value="PROTEASOME_BETA_2"/>
    <property type="match status" value="1"/>
</dbReference>
<reference key="1">
    <citation type="journal article" date="2005" name="Nucleic Acids Res.">
        <title>Genomic blueprint of Hahella chejuensis, a marine microbe producing an algicidal agent.</title>
        <authorList>
            <person name="Jeong H."/>
            <person name="Yim J.H."/>
            <person name="Lee C."/>
            <person name="Choi S.-H."/>
            <person name="Park Y.K."/>
            <person name="Yoon S.H."/>
            <person name="Hur C.-G."/>
            <person name="Kang H.-Y."/>
            <person name="Kim D."/>
            <person name="Lee H.H."/>
            <person name="Park K.H."/>
            <person name="Park S.-H."/>
            <person name="Park H.-S."/>
            <person name="Lee H.K."/>
            <person name="Oh T.K."/>
            <person name="Kim J.F."/>
        </authorList>
    </citation>
    <scope>NUCLEOTIDE SEQUENCE [LARGE SCALE GENOMIC DNA]</scope>
    <source>
        <strain>KCTC 2396</strain>
    </source>
</reference>
<keyword id="KW-0021">Allosteric enzyme</keyword>
<keyword id="KW-0963">Cytoplasm</keyword>
<keyword id="KW-0378">Hydrolase</keyword>
<keyword id="KW-0479">Metal-binding</keyword>
<keyword id="KW-0645">Protease</keyword>
<keyword id="KW-1185">Reference proteome</keyword>
<keyword id="KW-0915">Sodium</keyword>
<keyword id="KW-0888">Threonine protease</keyword>
<accession>Q2S9P4</accession>
<protein>
    <recommendedName>
        <fullName evidence="1">ATP-dependent protease subunit HslV</fullName>
        <ecNumber evidence="1">3.4.25.2</ecNumber>
    </recommendedName>
</protein>
<feature type="chain" id="PRO_1000012618" description="ATP-dependent protease subunit HslV">
    <location>
        <begin position="1"/>
        <end position="181"/>
    </location>
</feature>
<feature type="active site" evidence="1">
    <location>
        <position position="2"/>
    </location>
</feature>
<feature type="binding site" evidence="1">
    <location>
        <position position="157"/>
    </location>
    <ligand>
        <name>Na(+)</name>
        <dbReference type="ChEBI" id="CHEBI:29101"/>
    </ligand>
</feature>
<feature type="binding site" evidence="1">
    <location>
        <position position="160"/>
    </location>
    <ligand>
        <name>Na(+)</name>
        <dbReference type="ChEBI" id="CHEBI:29101"/>
    </ligand>
</feature>
<feature type="binding site" evidence="1">
    <location>
        <position position="163"/>
    </location>
    <ligand>
        <name>Na(+)</name>
        <dbReference type="ChEBI" id="CHEBI:29101"/>
    </ligand>
</feature>
<name>HSLV_HAHCH</name>
<proteinExistence type="inferred from homology"/>